<organism>
    <name type="scientific">Leptospira biflexa serovar Patoc (strain Patoc 1 / ATCC 23582 / Paris)</name>
    <dbReference type="NCBI Taxonomy" id="456481"/>
    <lineage>
        <taxon>Bacteria</taxon>
        <taxon>Pseudomonadati</taxon>
        <taxon>Spirochaetota</taxon>
        <taxon>Spirochaetia</taxon>
        <taxon>Leptospirales</taxon>
        <taxon>Leptospiraceae</taxon>
        <taxon>Leptospira</taxon>
    </lineage>
</organism>
<name>FEOB_LEPBP</name>
<evidence type="ECO:0000250" key="1">
    <source>
        <dbReference type="UniProtKB" id="P33650"/>
    </source>
</evidence>
<evidence type="ECO:0000250" key="2">
    <source>
        <dbReference type="UniProtKB" id="Q8GNS3"/>
    </source>
</evidence>
<evidence type="ECO:0000255" key="3"/>
<evidence type="ECO:0000255" key="4">
    <source>
        <dbReference type="PROSITE-ProRule" id="PRU01048"/>
    </source>
</evidence>
<evidence type="ECO:0000305" key="5"/>
<sequence length="690" mass="77649">MKEKNIYLVGNPNCGKTTLFNQLTGLNQKTGNFSGVTVEKKEGVVYLPNLELKITDLPGTYGLGGIAEDKKIAYEVLLKRKENEVVIYVLDALNLERGLQFLLQIIDMGVPTLVVLTMKDVLEKKRIQLDLKKLKHSLGLEIVLVNAKSGEGISELKTLLSKEESYRKQKRLWTWGSKEESFLTSLKQKLKITTNEAEFFLSQALKFLNHDPHLQDSRYLNQFPNETKQFLTKELESKPLQFAYQEEMIHRSILIKKIISETIHYPIAIQGSWEERLDRIFLHPILGFVCFFLLMGLLFQSLFSFAEIPMDLIEEGITGLQETIGNVLSDGPLKSLLIEGILGGVGSVVVFVPQIALLFLFIGILEESGYLARASFLMDRLMGKFGLSGKSFIPLLSSAACAVPAILGTRTIENKSDRFTTIMVSPLIMCSARYPVYILIVGTVFSYPPIFGIFNVQGFVLFSMFFLGMIVSFTFALIFRKTVFKENASYFVMELPRYNLPSFKSLFFTVYGKVKSFLATAGQIILYISVILWFLSHFPAEYKDNVWKTSPIETSYIGRVGKVMEPAIEPLGFDWKIGISILTSFAAREVMVSTLAVLYGSEEEGEESESLRETLRADKKPDGSPVWTPLTGLSLLLFFAFASQCMSTLAVTKKETGSLLWPTVQFLYMTTLAIFTSFLVFQLGKILGFV</sequence>
<gene>
    <name type="primary">feoB</name>
    <name type="ordered locus">LEPBI_I0879</name>
</gene>
<protein>
    <recommendedName>
        <fullName evidence="5">Fe(2+) transporter FeoB</fullName>
    </recommendedName>
    <alternativeName>
        <fullName>Ferrous iron transport protein B</fullName>
    </alternativeName>
</protein>
<reference key="1">
    <citation type="journal article" date="2005" name="J. Bacteriol.">
        <title>Isolation and characterization of FecA- and FeoB-mediated iron acquisition systems of the spirochete Leptospira biflexa by random insertional mutagenesis.</title>
        <authorList>
            <person name="Louvel H."/>
            <person name="Saint Girons I."/>
            <person name="Picardeau M."/>
        </authorList>
    </citation>
    <scope>NUCLEOTIDE SEQUENCE [GENOMIC DNA]</scope>
    <source>
        <strain>Patoc I / Serovar Patoc</strain>
    </source>
</reference>
<reference key="2">
    <citation type="journal article" date="2008" name="PLoS ONE">
        <title>Genome sequence of the saprophyte Leptospira biflexa provides insights into the evolution of Leptospira and the pathogenesis of leptospirosis.</title>
        <authorList>
            <person name="Picardeau M."/>
            <person name="Bulach D.M."/>
            <person name="Bouchier C."/>
            <person name="Zuerner R.L."/>
            <person name="Zidane N."/>
            <person name="Wilson P.J."/>
            <person name="Creno S."/>
            <person name="Kuczek E.S."/>
            <person name="Bommezzadri S."/>
            <person name="Davis J.C."/>
            <person name="McGrath A."/>
            <person name="Johnson M.J."/>
            <person name="Boursaux-Eude C."/>
            <person name="Seemann T."/>
            <person name="Rouy Z."/>
            <person name="Coppel R.L."/>
            <person name="Rood J.I."/>
            <person name="Lajus A."/>
            <person name="Davies J.K."/>
            <person name="Medigue C."/>
            <person name="Adler B."/>
        </authorList>
    </citation>
    <scope>NUCLEOTIDE SEQUENCE [LARGE SCALE GENOMIC DNA]</scope>
    <source>
        <strain>Patoc 1 / ATCC 23582 / Paris</strain>
    </source>
</reference>
<comment type="function">
    <text evidence="2">Probable transporter of a GTP-driven Fe(2+) uptake system.</text>
</comment>
<comment type="subcellular location">
    <subcellularLocation>
        <location evidence="1">Cell inner membrane</location>
        <topology evidence="1">Multi-pass membrane protein</topology>
    </subcellularLocation>
</comment>
<comment type="similarity">
    <text evidence="4">Belongs to the TRAFAC class TrmE-Era-EngA-EngB-Septin-like GTPase superfamily. FeoB GTPase (TC 9.A.8) family.</text>
</comment>
<feature type="chain" id="PRO_0000210836" description="Fe(2+) transporter FeoB">
    <location>
        <begin position="1"/>
        <end position="690"/>
    </location>
</feature>
<feature type="transmembrane region" description="Helical" evidence="3">
    <location>
        <begin position="280"/>
        <end position="300"/>
    </location>
</feature>
<feature type="transmembrane region" description="Helical" evidence="3">
    <location>
        <begin position="345"/>
        <end position="365"/>
    </location>
</feature>
<feature type="transmembrane region" description="Helical" evidence="3">
    <location>
        <begin position="387"/>
        <end position="407"/>
    </location>
</feature>
<feature type="transmembrane region" description="Helical" evidence="3">
    <location>
        <begin position="434"/>
        <end position="454"/>
    </location>
</feature>
<feature type="transmembrane region" description="Helical" evidence="3">
    <location>
        <begin position="459"/>
        <end position="479"/>
    </location>
</feature>
<feature type="transmembrane region" description="Helical" evidence="3">
    <location>
        <begin position="516"/>
        <end position="536"/>
    </location>
</feature>
<feature type="transmembrane region" description="Helical" evidence="3">
    <location>
        <begin position="623"/>
        <end position="643"/>
    </location>
</feature>
<feature type="transmembrane region" description="Helical" evidence="3">
    <location>
        <begin position="670"/>
        <end position="690"/>
    </location>
</feature>
<feature type="domain" description="FeoB-type G" evidence="4">
    <location>
        <begin position="3"/>
        <end position="166"/>
    </location>
</feature>
<feature type="binding site" evidence="4">
    <location>
        <begin position="10"/>
        <end position="17"/>
    </location>
    <ligand>
        <name>GTP</name>
        <dbReference type="ChEBI" id="CHEBI:37565"/>
    </ligand>
</feature>
<feature type="binding site" evidence="4">
    <location>
        <begin position="35"/>
        <end position="40"/>
    </location>
    <ligand>
        <name>GTP</name>
        <dbReference type="ChEBI" id="CHEBI:37565"/>
    </ligand>
</feature>
<feature type="binding site" evidence="4">
    <location>
        <begin position="56"/>
        <end position="59"/>
    </location>
    <ligand>
        <name>GTP</name>
        <dbReference type="ChEBI" id="CHEBI:37565"/>
    </ligand>
</feature>
<proteinExistence type="inferred from homology"/>
<dbReference type="EMBL" id="AY744289">
    <property type="protein sequence ID" value="AAU93398.1"/>
    <property type="molecule type" value="Genomic_DNA"/>
</dbReference>
<dbReference type="EMBL" id="CP000786">
    <property type="protein sequence ID" value="ABZ97004.1"/>
    <property type="molecule type" value="Genomic_DNA"/>
</dbReference>
<dbReference type="RefSeq" id="WP_012387888.1">
    <property type="nucleotide sequence ID" value="NC_010602.1"/>
</dbReference>
<dbReference type="SMR" id="Q5XPH7"/>
<dbReference type="STRING" id="456481.LEPBI_I0879"/>
<dbReference type="TCDB" id="9.A.8.1.4">
    <property type="family name" value="the ferrous iron uptake (feob) family"/>
</dbReference>
<dbReference type="KEGG" id="lbi:LEPBI_I0879"/>
<dbReference type="HOGENOM" id="CLU_013350_3_2_12"/>
<dbReference type="OrthoDB" id="9809127at2"/>
<dbReference type="BioCyc" id="LBIF456481:LEPBI_RS04305-MONOMER"/>
<dbReference type="Proteomes" id="UP000001847">
    <property type="component" value="Chromosome I"/>
</dbReference>
<dbReference type="GO" id="GO:0005886">
    <property type="term" value="C:plasma membrane"/>
    <property type="evidence" value="ECO:0007669"/>
    <property type="project" value="UniProtKB-SubCell"/>
</dbReference>
<dbReference type="GO" id="GO:0015093">
    <property type="term" value="F:ferrous iron transmembrane transporter activity"/>
    <property type="evidence" value="ECO:0007669"/>
    <property type="project" value="InterPro"/>
</dbReference>
<dbReference type="GO" id="GO:0005525">
    <property type="term" value="F:GTP binding"/>
    <property type="evidence" value="ECO:0007669"/>
    <property type="project" value="UniProtKB-KW"/>
</dbReference>
<dbReference type="CDD" id="cd01879">
    <property type="entry name" value="FeoB"/>
    <property type="match status" value="1"/>
</dbReference>
<dbReference type="Gene3D" id="3.40.50.300">
    <property type="entry name" value="P-loop containing nucleotide triphosphate hydrolases"/>
    <property type="match status" value="1"/>
</dbReference>
<dbReference type="InterPro" id="IPR003373">
    <property type="entry name" value="Fe2_transport_prot-B"/>
</dbReference>
<dbReference type="InterPro" id="IPR011640">
    <property type="entry name" value="Fe2_transport_prot_B_C"/>
</dbReference>
<dbReference type="InterPro" id="IPR050860">
    <property type="entry name" value="FeoB_GTPase"/>
</dbReference>
<dbReference type="InterPro" id="IPR030389">
    <property type="entry name" value="G_FEOB_dom"/>
</dbReference>
<dbReference type="InterPro" id="IPR011642">
    <property type="entry name" value="Gate_dom"/>
</dbReference>
<dbReference type="InterPro" id="IPR006073">
    <property type="entry name" value="GTP-bd"/>
</dbReference>
<dbReference type="InterPro" id="IPR027417">
    <property type="entry name" value="P-loop_NTPase"/>
</dbReference>
<dbReference type="NCBIfam" id="TIGR00437">
    <property type="entry name" value="feoB"/>
    <property type="match status" value="1"/>
</dbReference>
<dbReference type="PANTHER" id="PTHR43185:SF1">
    <property type="entry name" value="FE(2+) TRANSPORTER FEOB"/>
    <property type="match status" value="1"/>
</dbReference>
<dbReference type="PANTHER" id="PTHR43185">
    <property type="entry name" value="FERROUS IRON TRANSPORT PROTEIN B"/>
    <property type="match status" value="1"/>
</dbReference>
<dbReference type="Pfam" id="PF07664">
    <property type="entry name" value="FeoB_C"/>
    <property type="match status" value="1"/>
</dbReference>
<dbReference type="Pfam" id="PF02421">
    <property type="entry name" value="FeoB_N"/>
    <property type="match status" value="1"/>
</dbReference>
<dbReference type="Pfam" id="PF07670">
    <property type="entry name" value="Gate"/>
    <property type="match status" value="2"/>
</dbReference>
<dbReference type="PRINTS" id="PR00326">
    <property type="entry name" value="GTP1OBG"/>
</dbReference>
<dbReference type="SUPFAM" id="SSF52540">
    <property type="entry name" value="P-loop containing nucleoside triphosphate hydrolases"/>
    <property type="match status" value="1"/>
</dbReference>
<dbReference type="PROSITE" id="PS51711">
    <property type="entry name" value="G_FEOB"/>
    <property type="match status" value="1"/>
</dbReference>
<keyword id="KW-0997">Cell inner membrane</keyword>
<keyword id="KW-1003">Cell membrane</keyword>
<keyword id="KW-0342">GTP-binding</keyword>
<keyword id="KW-0406">Ion transport</keyword>
<keyword id="KW-0408">Iron</keyword>
<keyword id="KW-0410">Iron transport</keyword>
<keyword id="KW-0472">Membrane</keyword>
<keyword id="KW-0547">Nucleotide-binding</keyword>
<keyword id="KW-1185">Reference proteome</keyword>
<keyword id="KW-0812">Transmembrane</keyword>
<keyword id="KW-1133">Transmembrane helix</keyword>
<keyword id="KW-0813">Transport</keyword>
<accession>Q5XPH7</accession>
<accession>B0SLV2</accession>